<reference key="1">
    <citation type="journal article" date="2002" name="Nature">
        <title>Comparison of the genomes of two Xanthomonas pathogens with differing host specificities.</title>
        <authorList>
            <person name="da Silva A.C.R."/>
            <person name="Ferro J.A."/>
            <person name="Reinach F.C."/>
            <person name="Farah C.S."/>
            <person name="Furlan L.R."/>
            <person name="Quaggio R.B."/>
            <person name="Monteiro-Vitorello C.B."/>
            <person name="Van Sluys M.A."/>
            <person name="Almeida N.F. Jr."/>
            <person name="Alves L.M.C."/>
            <person name="do Amaral A.M."/>
            <person name="Bertolini M.C."/>
            <person name="Camargo L.E.A."/>
            <person name="Camarotte G."/>
            <person name="Cannavan F."/>
            <person name="Cardozo J."/>
            <person name="Chambergo F."/>
            <person name="Ciapina L.P."/>
            <person name="Cicarelli R.M.B."/>
            <person name="Coutinho L.L."/>
            <person name="Cursino-Santos J.R."/>
            <person name="El-Dorry H."/>
            <person name="Faria J.B."/>
            <person name="Ferreira A.J.S."/>
            <person name="Ferreira R.C.C."/>
            <person name="Ferro M.I.T."/>
            <person name="Formighieri E.F."/>
            <person name="Franco M.C."/>
            <person name="Greggio C.C."/>
            <person name="Gruber A."/>
            <person name="Katsuyama A.M."/>
            <person name="Kishi L.T."/>
            <person name="Leite R.P."/>
            <person name="Lemos E.G.M."/>
            <person name="Lemos M.V.F."/>
            <person name="Locali E.C."/>
            <person name="Machado M.A."/>
            <person name="Madeira A.M.B.N."/>
            <person name="Martinez-Rossi N.M."/>
            <person name="Martins E.C."/>
            <person name="Meidanis J."/>
            <person name="Menck C.F.M."/>
            <person name="Miyaki C.Y."/>
            <person name="Moon D.H."/>
            <person name="Moreira L.M."/>
            <person name="Novo M.T.M."/>
            <person name="Okura V.K."/>
            <person name="Oliveira M.C."/>
            <person name="Oliveira V.R."/>
            <person name="Pereira H.A."/>
            <person name="Rossi A."/>
            <person name="Sena J.A.D."/>
            <person name="Silva C."/>
            <person name="de Souza R.F."/>
            <person name="Spinola L.A.F."/>
            <person name="Takita M.A."/>
            <person name="Tamura R.E."/>
            <person name="Teixeira E.C."/>
            <person name="Tezza R.I.D."/>
            <person name="Trindade dos Santos M."/>
            <person name="Truffi D."/>
            <person name="Tsai S.M."/>
            <person name="White F.F."/>
            <person name="Setubal J.C."/>
            <person name="Kitajima J.P."/>
        </authorList>
    </citation>
    <scope>NUCLEOTIDE SEQUENCE [LARGE SCALE GENOMIC DNA]</scope>
    <source>
        <strain>ATCC 33913 / DSM 3586 / NCPPB 528 / LMG 568 / P 25</strain>
    </source>
</reference>
<organism>
    <name type="scientific">Xanthomonas campestris pv. campestris (strain ATCC 33913 / DSM 3586 / NCPPB 528 / LMG 568 / P 25)</name>
    <dbReference type="NCBI Taxonomy" id="190485"/>
    <lineage>
        <taxon>Bacteria</taxon>
        <taxon>Pseudomonadati</taxon>
        <taxon>Pseudomonadota</taxon>
        <taxon>Gammaproteobacteria</taxon>
        <taxon>Lysobacterales</taxon>
        <taxon>Lysobacteraceae</taxon>
        <taxon>Xanthomonas</taxon>
    </lineage>
</organism>
<keyword id="KW-0028">Amino-acid biosynthesis</keyword>
<keyword id="KW-0067">ATP-binding</keyword>
<keyword id="KW-0963">Cytoplasm</keyword>
<keyword id="KW-0418">Kinase</keyword>
<keyword id="KW-0547">Nucleotide-binding</keyword>
<keyword id="KW-0641">Proline biosynthesis</keyword>
<keyword id="KW-1185">Reference proteome</keyword>
<keyword id="KW-0808">Transferase</keyword>
<proteinExistence type="inferred from homology"/>
<evidence type="ECO:0000255" key="1">
    <source>
        <dbReference type="HAMAP-Rule" id="MF_00456"/>
    </source>
</evidence>
<feature type="chain" id="PRO_0000109758" description="Glutamate 5-kinase">
    <location>
        <begin position="1"/>
        <end position="362"/>
    </location>
</feature>
<feature type="domain" description="PUA" evidence="1">
    <location>
        <begin position="267"/>
        <end position="348"/>
    </location>
</feature>
<feature type="binding site" evidence="1">
    <location>
        <position position="3"/>
    </location>
    <ligand>
        <name>ATP</name>
        <dbReference type="ChEBI" id="CHEBI:30616"/>
    </ligand>
</feature>
<feature type="binding site" evidence="1">
    <location>
        <position position="43"/>
    </location>
    <ligand>
        <name>substrate</name>
    </ligand>
</feature>
<feature type="binding site" evidence="1">
    <location>
        <position position="128"/>
    </location>
    <ligand>
        <name>substrate</name>
    </ligand>
</feature>
<feature type="binding site" evidence="1">
    <location>
        <position position="140"/>
    </location>
    <ligand>
        <name>substrate</name>
    </ligand>
</feature>
<feature type="binding site" evidence="1">
    <location>
        <begin position="160"/>
        <end position="161"/>
    </location>
    <ligand>
        <name>ATP</name>
        <dbReference type="ChEBI" id="CHEBI:30616"/>
    </ligand>
</feature>
<feature type="binding site" evidence="1">
    <location>
        <begin position="202"/>
        <end position="208"/>
    </location>
    <ligand>
        <name>ATP</name>
        <dbReference type="ChEBI" id="CHEBI:30616"/>
    </ligand>
</feature>
<protein>
    <recommendedName>
        <fullName evidence="1">Glutamate 5-kinase</fullName>
        <ecNumber evidence="1">2.7.2.11</ecNumber>
    </recommendedName>
    <alternativeName>
        <fullName evidence="1">Gamma-glutamyl kinase</fullName>
        <shortName evidence="1">GK</shortName>
    </alternativeName>
</protein>
<comment type="function">
    <text evidence="1">Catalyzes the transfer of a phosphate group to glutamate to form L-glutamate 5-phosphate.</text>
</comment>
<comment type="catalytic activity">
    <reaction evidence="1">
        <text>L-glutamate + ATP = L-glutamyl 5-phosphate + ADP</text>
        <dbReference type="Rhea" id="RHEA:14877"/>
        <dbReference type="ChEBI" id="CHEBI:29985"/>
        <dbReference type="ChEBI" id="CHEBI:30616"/>
        <dbReference type="ChEBI" id="CHEBI:58274"/>
        <dbReference type="ChEBI" id="CHEBI:456216"/>
        <dbReference type="EC" id="2.7.2.11"/>
    </reaction>
</comment>
<comment type="pathway">
    <text evidence="1">Amino-acid biosynthesis; L-proline biosynthesis; L-glutamate 5-semialdehyde from L-glutamate: step 1/2.</text>
</comment>
<comment type="subcellular location">
    <subcellularLocation>
        <location evidence="1">Cytoplasm</location>
    </subcellularLocation>
</comment>
<comment type="similarity">
    <text evidence="1">Belongs to the glutamate 5-kinase family.</text>
</comment>
<gene>
    <name evidence="1" type="primary">proB</name>
    <name type="ordered locus">XCC2239</name>
</gene>
<accession>Q8P8K2</accession>
<name>PROB_XANCP</name>
<sequence>MLKVGSSLLAADGGGLSPRFALGLAQFVSANLAAGREVVIVSSGAVAAGRAILPKAAEAGAAIAARQALAALGQAQLIALWQRFFERPVAQVLLTHDDLRNRRRYLNARATLGELLRLGALPVINENDTVSVDELKLGDNDNLAAIVAALVDADALFIATDIDGLYSADPRSNPLARPLDEVAELSAEVLAMAGGSGSSVGTGGMRTKLEAAAKAGAAGIETYLFNGRSAEVVRGLAQDRLCGTRIHAARTRIAARKYWLRHAPVEPGTILIDAGAALALTDKGASLLPGGVAGAEGDFRRGDMVEIHLRDSVGSRCLARGVSQYSALDVRRIARRHSREIEPILGYSYGENVVHRDDLVVL</sequence>
<dbReference type="EC" id="2.7.2.11" evidence="1"/>
<dbReference type="EMBL" id="AE008922">
    <property type="protein sequence ID" value="AAM41518.1"/>
    <property type="molecule type" value="Genomic_DNA"/>
</dbReference>
<dbReference type="RefSeq" id="NP_637594.2">
    <property type="nucleotide sequence ID" value="NC_003902.1"/>
</dbReference>
<dbReference type="SMR" id="Q8P8K2"/>
<dbReference type="STRING" id="190485.XCC2239"/>
<dbReference type="EnsemblBacteria" id="AAM41518">
    <property type="protein sequence ID" value="AAM41518"/>
    <property type="gene ID" value="XCC2239"/>
</dbReference>
<dbReference type="KEGG" id="xcc:XCC2239"/>
<dbReference type="PATRIC" id="fig|190485.4.peg.2389"/>
<dbReference type="eggNOG" id="COG0263">
    <property type="taxonomic scope" value="Bacteria"/>
</dbReference>
<dbReference type="HOGENOM" id="CLU_025400_2_0_6"/>
<dbReference type="OrthoDB" id="9804434at2"/>
<dbReference type="UniPathway" id="UPA00098">
    <property type="reaction ID" value="UER00359"/>
</dbReference>
<dbReference type="Proteomes" id="UP000001010">
    <property type="component" value="Chromosome"/>
</dbReference>
<dbReference type="GO" id="GO:0005829">
    <property type="term" value="C:cytosol"/>
    <property type="evidence" value="ECO:0000318"/>
    <property type="project" value="GO_Central"/>
</dbReference>
<dbReference type="GO" id="GO:0005524">
    <property type="term" value="F:ATP binding"/>
    <property type="evidence" value="ECO:0007669"/>
    <property type="project" value="UniProtKB-KW"/>
</dbReference>
<dbReference type="GO" id="GO:0004349">
    <property type="term" value="F:glutamate 5-kinase activity"/>
    <property type="evidence" value="ECO:0000318"/>
    <property type="project" value="GO_Central"/>
</dbReference>
<dbReference type="GO" id="GO:0003723">
    <property type="term" value="F:RNA binding"/>
    <property type="evidence" value="ECO:0007669"/>
    <property type="project" value="InterPro"/>
</dbReference>
<dbReference type="GO" id="GO:0055129">
    <property type="term" value="P:L-proline biosynthetic process"/>
    <property type="evidence" value="ECO:0007669"/>
    <property type="project" value="UniProtKB-UniRule"/>
</dbReference>
<dbReference type="GO" id="GO:0006561">
    <property type="term" value="P:proline biosynthetic process"/>
    <property type="evidence" value="ECO:0000318"/>
    <property type="project" value="GO_Central"/>
</dbReference>
<dbReference type="CDD" id="cd04242">
    <property type="entry name" value="AAK_G5K_ProB"/>
    <property type="match status" value="1"/>
</dbReference>
<dbReference type="CDD" id="cd21157">
    <property type="entry name" value="PUA_G5K"/>
    <property type="match status" value="1"/>
</dbReference>
<dbReference type="FunFam" id="2.30.130.10:FF:000007">
    <property type="entry name" value="Glutamate 5-kinase"/>
    <property type="match status" value="1"/>
</dbReference>
<dbReference type="FunFam" id="3.40.1160.10:FF:000018">
    <property type="entry name" value="Glutamate 5-kinase"/>
    <property type="match status" value="1"/>
</dbReference>
<dbReference type="Gene3D" id="3.40.1160.10">
    <property type="entry name" value="Acetylglutamate kinase-like"/>
    <property type="match status" value="1"/>
</dbReference>
<dbReference type="Gene3D" id="2.30.130.10">
    <property type="entry name" value="PUA domain"/>
    <property type="match status" value="1"/>
</dbReference>
<dbReference type="HAMAP" id="MF_00456">
    <property type="entry name" value="ProB"/>
    <property type="match status" value="1"/>
</dbReference>
<dbReference type="InterPro" id="IPR036393">
    <property type="entry name" value="AceGlu_kinase-like_sf"/>
</dbReference>
<dbReference type="InterPro" id="IPR001048">
    <property type="entry name" value="Asp/Glu/Uridylate_kinase"/>
</dbReference>
<dbReference type="InterPro" id="IPR041739">
    <property type="entry name" value="G5K_ProB"/>
</dbReference>
<dbReference type="InterPro" id="IPR001057">
    <property type="entry name" value="Glu/AcGlu_kinase"/>
</dbReference>
<dbReference type="InterPro" id="IPR011529">
    <property type="entry name" value="Glu_5kinase"/>
</dbReference>
<dbReference type="InterPro" id="IPR005715">
    <property type="entry name" value="Glu_5kinase/COase_Synthase"/>
</dbReference>
<dbReference type="InterPro" id="IPR019797">
    <property type="entry name" value="Glutamate_5-kinase_CS"/>
</dbReference>
<dbReference type="InterPro" id="IPR002478">
    <property type="entry name" value="PUA"/>
</dbReference>
<dbReference type="InterPro" id="IPR015947">
    <property type="entry name" value="PUA-like_sf"/>
</dbReference>
<dbReference type="InterPro" id="IPR036974">
    <property type="entry name" value="PUA_sf"/>
</dbReference>
<dbReference type="NCBIfam" id="TIGR01027">
    <property type="entry name" value="proB"/>
    <property type="match status" value="1"/>
</dbReference>
<dbReference type="PANTHER" id="PTHR43654">
    <property type="entry name" value="GLUTAMATE 5-KINASE"/>
    <property type="match status" value="1"/>
</dbReference>
<dbReference type="PANTHER" id="PTHR43654:SF1">
    <property type="entry name" value="ISOPENTENYL PHOSPHATE KINASE"/>
    <property type="match status" value="1"/>
</dbReference>
<dbReference type="Pfam" id="PF00696">
    <property type="entry name" value="AA_kinase"/>
    <property type="match status" value="1"/>
</dbReference>
<dbReference type="Pfam" id="PF01472">
    <property type="entry name" value="PUA"/>
    <property type="match status" value="1"/>
</dbReference>
<dbReference type="PIRSF" id="PIRSF000729">
    <property type="entry name" value="GK"/>
    <property type="match status" value="1"/>
</dbReference>
<dbReference type="PRINTS" id="PR00474">
    <property type="entry name" value="GLU5KINASE"/>
</dbReference>
<dbReference type="SMART" id="SM00359">
    <property type="entry name" value="PUA"/>
    <property type="match status" value="1"/>
</dbReference>
<dbReference type="SUPFAM" id="SSF53633">
    <property type="entry name" value="Carbamate kinase-like"/>
    <property type="match status" value="1"/>
</dbReference>
<dbReference type="SUPFAM" id="SSF88697">
    <property type="entry name" value="PUA domain-like"/>
    <property type="match status" value="1"/>
</dbReference>
<dbReference type="PROSITE" id="PS00902">
    <property type="entry name" value="GLUTAMATE_5_KINASE"/>
    <property type="match status" value="1"/>
</dbReference>
<dbReference type="PROSITE" id="PS50890">
    <property type="entry name" value="PUA"/>
    <property type="match status" value="1"/>
</dbReference>